<keyword id="KW-0067">ATP-binding</keyword>
<keyword id="KW-0963">Cytoplasm</keyword>
<keyword id="KW-0347">Helicase</keyword>
<keyword id="KW-0378">Hydrolase</keyword>
<keyword id="KW-0396">Initiation factor</keyword>
<keyword id="KW-0547">Nucleotide-binding</keyword>
<keyword id="KW-0648">Protein biosynthesis</keyword>
<keyword id="KW-1185">Reference proteome</keyword>
<keyword id="KW-0694">RNA-binding</keyword>
<name>DBP1_CANGA</name>
<protein>
    <recommendedName>
        <fullName>ATP-dependent RNA helicase DBP1</fullName>
        <ecNumber>3.6.4.13</ecNumber>
    </recommendedName>
</protein>
<dbReference type="EC" id="3.6.4.13"/>
<dbReference type="EMBL" id="CR380956">
    <property type="protein sequence ID" value="CAG60957.1"/>
    <property type="molecule type" value="Genomic_DNA"/>
</dbReference>
<dbReference type="RefSeq" id="XP_448006.1">
    <property type="nucleotide sequence ID" value="XM_448006.1"/>
</dbReference>
<dbReference type="SMR" id="Q6FP38"/>
<dbReference type="STRING" id="284593.Q6FP38"/>
<dbReference type="EnsemblFungi" id="CAGL0J06908g-T">
    <property type="protein sequence ID" value="CAGL0J06908g-T-p1"/>
    <property type="gene ID" value="CAGL0J06908g"/>
</dbReference>
<dbReference type="KEGG" id="cgr:2889622"/>
<dbReference type="CGD" id="CAL0133642">
    <property type="gene designation" value="CAGL0J06908g"/>
</dbReference>
<dbReference type="VEuPathDB" id="FungiDB:CAGL0J06908g"/>
<dbReference type="eggNOG" id="KOG0335">
    <property type="taxonomic scope" value="Eukaryota"/>
</dbReference>
<dbReference type="HOGENOM" id="CLU_003041_16_3_1"/>
<dbReference type="InParanoid" id="Q6FP38"/>
<dbReference type="OMA" id="SYAGMQP"/>
<dbReference type="Proteomes" id="UP000002428">
    <property type="component" value="Chromosome J"/>
</dbReference>
<dbReference type="GO" id="GO:0005737">
    <property type="term" value="C:cytoplasm"/>
    <property type="evidence" value="ECO:0007669"/>
    <property type="project" value="UniProtKB-SubCell"/>
</dbReference>
<dbReference type="GO" id="GO:0005524">
    <property type="term" value="F:ATP binding"/>
    <property type="evidence" value="ECO:0007669"/>
    <property type="project" value="UniProtKB-KW"/>
</dbReference>
<dbReference type="GO" id="GO:0016887">
    <property type="term" value="F:ATP hydrolysis activity"/>
    <property type="evidence" value="ECO:0007669"/>
    <property type="project" value="RHEA"/>
</dbReference>
<dbReference type="GO" id="GO:0003723">
    <property type="term" value="F:RNA binding"/>
    <property type="evidence" value="ECO:0007669"/>
    <property type="project" value="UniProtKB-KW"/>
</dbReference>
<dbReference type="GO" id="GO:0003724">
    <property type="term" value="F:RNA helicase activity"/>
    <property type="evidence" value="ECO:0007669"/>
    <property type="project" value="UniProtKB-EC"/>
</dbReference>
<dbReference type="GO" id="GO:0003743">
    <property type="term" value="F:translation initiation factor activity"/>
    <property type="evidence" value="ECO:0007669"/>
    <property type="project" value="UniProtKB-KW"/>
</dbReference>
<dbReference type="CDD" id="cd18787">
    <property type="entry name" value="SF2_C_DEAD"/>
    <property type="match status" value="1"/>
</dbReference>
<dbReference type="FunFam" id="3.40.50.300:FF:000160">
    <property type="entry name" value="ATP-dependent RNA helicase DDX3X"/>
    <property type="match status" value="1"/>
</dbReference>
<dbReference type="FunFam" id="3.40.50.300:FF:000008">
    <property type="entry name" value="ATP-dependent RNA helicase RhlB"/>
    <property type="match status" value="1"/>
</dbReference>
<dbReference type="Gene3D" id="3.40.50.300">
    <property type="entry name" value="P-loop containing nucleotide triphosphate hydrolases"/>
    <property type="match status" value="2"/>
</dbReference>
<dbReference type="InterPro" id="IPR011545">
    <property type="entry name" value="DEAD/DEAH_box_helicase_dom"/>
</dbReference>
<dbReference type="InterPro" id="IPR014001">
    <property type="entry name" value="Helicase_ATP-bd"/>
</dbReference>
<dbReference type="InterPro" id="IPR001650">
    <property type="entry name" value="Helicase_C-like"/>
</dbReference>
<dbReference type="InterPro" id="IPR027417">
    <property type="entry name" value="P-loop_NTPase"/>
</dbReference>
<dbReference type="InterPro" id="IPR000629">
    <property type="entry name" value="RNA-helicase_DEAD-box_CS"/>
</dbReference>
<dbReference type="InterPro" id="IPR014014">
    <property type="entry name" value="RNA_helicase_DEAD_Q_motif"/>
</dbReference>
<dbReference type="PANTHER" id="PTHR47958">
    <property type="entry name" value="ATP-DEPENDENT RNA HELICASE DBP3"/>
    <property type="match status" value="1"/>
</dbReference>
<dbReference type="Pfam" id="PF00270">
    <property type="entry name" value="DEAD"/>
    <property type="match status" value="1"/>
</dbReference>
<dbReference type="Pfam" id="PF00271">
    <property type="entry name" value="Helicase_C"/>
    <property type="match status" value="1"/>
</dbReference>
<dbReference type="SMART" id="SM00487">
    <property type="entry name" value="DEXDc"/>
    <property type="match status" value="1"/>
</dbReference>
<dbReference type="SMART" id="SM00490">
    <property type="entry name" value="HELICc"/>
    <property type="match status" value="1"/>
</dbReference>
<dbReference type="SUPFAM" id="SSF52540">
    <property type="entry name" value="P-loop containing nucleoside triphosphate hydrolases"/>
    <property type="match status" value="1"/>
</dbReference>
<dbReference type="PROSITE" id="PS00039">
    <property type="entry name" value="DEAD_ATP_HELICASE"/>
    <property type="match status" value="1"/>
</dbReference>
<dbReference type="PROSITE" id="PS51192">
    <property type="entry name" value="HELICASE_ATP_BIND_1"/>
    <property type="match status" value="1"/>
</dbReference>
<dbReference type="PROSITE" id="PS51194">
    <property type="entry name" value="HELICASE_CTER"/>
    <property type="match status" value="1"/>
</dbReference>
<dbReference type="PROSITE" id="PS51195">
    <property type="entry name" value="Q_MOTIF"/>
    <property type="match status" value="1"/>
</dbReference>
<comment type="function">
    <text evidence="1">ATP-binding RNA helicase involved in translation initiation. Remodels RNA in response to ADP and ATP concentrations by facilitating disruption, but also formation of RNA duplexes. Redundant to DED1, may be required in conditions in which DED1 expression is decreased (By similarity).</text>
</comment>
<comment type="catalytic activity">
    <reaction>
        <text>ATP + H2O = ADP + phosphate + H(+)</text>
        <dbReference type="Rhea" id="RHEA:13065"/>
        <dbReference type="ChEBI" id="CHEBI:15377"/>
        <dbReference type="ChEBI" id="CHEBI:15378"/>
        <dbReference type="ChEBI" id="CHEBI:30616"/>
        <dbReference type="ChEBI" id="CHEBI:43474"/>
        <dbReference type="ChEBI" id="CHEBI:456216"/>
        <dbReference type="EC" id="3.6.4.13"/>
    </reaction>
</comment>
<comment type="subcellular location">
    <subcellularLocation>
        <location evidence="1">Cytoplasm</location>
    </subcellularLocation>
</comment>
<comment type="domain">
    <text>The Q motif is unique to and characteristic of the DEAD box family of RNA helicases and controls ATP binding and hydrolysis.</text>
</comment>
<comment type="similarity">
    <text evidence="5">Belongs to the DEAD box helicase family. DDX3/DED1 subfamily.</text>
</comment>
<gene>
    <name type="primary">DBP1</name>
    <name type="ordered locus">CAGL0J06908g</name>
</gene>
<sequence>MSDGSGRYVPPHIRRGGGNSHESAAADGLSGSRYSGNGFFSSPNRGNHKSSGGFFGSRPFNDRRTGQGSRASGSGGFGGSGGRYGWVNGKHVPYPKNPRLEMELFGNATDHVTSGINFDNYDDIPVEASGDNVPEAITEFKSPPLDELLLENVELANFSKPTPVQKYSIPIVTKNRDLMACAQTGSGKTGGFLFPVLSELFLNGPAPLPEHTRHSYMRKCYPSALVLAPTRELAIQIFDEAKKYTYRSWVKPYVVYGGAPIGQQMRDMDRGCNLLVATPGRLNDLLERGKISLVNVKYLVLDEADRMLDMGFEPQIRHIVEDCDMPSVNDRQTLMFSATFPREIQHLARDFLKDYIFLSVGRVGSTSENIQQKVLFVEDYDKNSALLDILINEIDGLTLVFVETKRMADQLTDFLIVQNFKATAIHGDRTQAERERALHAFRNGIANILVATAVAARGLDIPNVTNVINYDLPTDIDDYVHRIGRTGRAGNVGVATSFFNSNSMNIAKELMDLLTEANQEVPQFLVNMVQDSMRFGRGGRNSRTGSNRGRGSNTRDYRHSNKDDWGSLGSSRRGFRSNDNRGFGNNWGSSSGDGFTNKAANSWW</sequence>
<organism>
    <name type="scientific">Candida glabrata (strain ATCC 2001 / BCRC 20586 / JCM 3761 / NBRC 0622 / NRRL Y-65 / CBS 138)</name>
    <name type="common">Yeast</name>
    <name type="synonym">Nakaseomyces glabratus</name>
    <dbReference type="NCBI Taxonomy" id="284593"/>
    <lineage>
        <taxon>Eukaryota</taxon>
        <taxon>Fungi</taxon>
        <taxon>Dikarya</taxon>
        <taxon>Ascomycota</taxon>
        <taxon>Saccharomycotina</taxon>
        <taxon>Saccharomycetes</taxon>
        <taxon>Saccharomycetales</taxon>
        <taxon>Saccharomycetaceae</taxon>
        <taxon>Nakaseomyces</taxon>
    </lineage>
</organism>
<evidence type="ECO:0000250" key="1"/>
<evidence type="ECO:0000255" key="2">
    <source>
        <dbReference type="PROSITE-ProRule" id="PRU00541"/>
    </source>
</evidence>
<evidence type="ECO:0000255" key="3">
    <source>
        <dbReference type="PROSITE-ProRule" id="PRU00542"/>
    </source>
</evidence>
<evidence type="ECO:0000256" key="4">
    <source>
        <dbReference type="SAM" id="MobiDB-lite"/>
    </source>
</evidence>
<evidence type="ECO:0000305" key="5"/>
<accession>Q6FP38</accession>
<reference key="1">
    <citation type="journal article" date="2004" name="Nature">
        <title>Genome evolution in yeasts.</title>
        <authorList>
            <person name="Dujon B."/>
            <person name="Sherman D."/>
            <person name="Fischer G."/>
            <person name="Durrens P."/>
            <person name="Casaregola S."/>
            <person name="Lafontaine I."/>
            <person name="de Montigny J."/>
            <person name="Marck C."/>
            <person name="Neuveglise C."/>
            <person name="Talla E."/>
            <person name="Goffard N."/>
            <person name="Frangeul L."/>
            <person name="Aigle M."/>
            <person name="Anthouard V."/>
            <person name="Babour A."/>
            <person name="Barbe V."/>
            <person name="Barnay S."/>
            <person name="Blanchin S."/>
            <person name="Beckerich J.-M."/>
            <person name="Beyne E."/>
            <person name="Bleykasten C."/>
            <person name="Boisrame A."/>
            <person name="Boyer J."/>
            <person name="Cattolico L."/>
            <person name="Confanioleri F."/>
            <person name="de Daruvar A."/>
            <person name="Despons L."/>
            <person name="Fabre E."/>
            <person name="Fairhead C."/>
            <person name="Ferry-Dumazet H."/>
            <person name="Groppi A."/>
            <person name="Hantraye F."/>
            <person name="Hennequin C."/>
            <person name="Jauniaux N."/>
            <person name="Joyet P."/>
            <person name="Kachouri R."/>
            <person name="Kerrest A."/>
            <person name="Koszul R."/>
            <person name="Lemaire M."/>
            <person name="Lesur I."/>
            <person name="Ma L."/>
            <person name="Muller H."/>
            <person name="Nicaud J.-M."/>
            <person name="Nikolski M."/>
            <person name="Oztas S."/>
            <person name="Ozier-Kalogeropoulos O."/>
            <person name="Pellenz S."/>
            <person name="Potier S."/>
            <person name="Richard G.-F."/>
            <person name="Straub M.-L."/>
            <person name="Suleau A."/>
            <person name="Swennen D."/>
            <person name="Tekaia F."/>
            <person name="Wesolowski-Louvel M."/>
            <person name="Westhof E."/>
            <person name="Wirth B."/>
            <person name="Zeniou-Meyer M."/>
            <person name="Zivanovic Y."/>
            <person name="Bolotin-Fukuhara M."/>
            <person name="Thierry A."/>
            <person name="Bouchier C."/>
            <person name="Caudron B."/>
            <person name="Scarpelli C."/>
            <person name="Gaillardin C."/>
            <person name="Weissenbach J."/>
            <person name="Wincker P."/>
            <person name="Souciet J.-L."/>
        </authorList>
    </citation>
    <scope>NUCLEOTIDE SEQUENCE [LARGE SCALE GENOMIC DNA]</scope>
    <source>
        <strain>ATCC 2001 / BCRC 20586 / JCM 3761 / NBRC 0622 / NRRL Y-65 / CBS 138</strain>
    </source>
</reference>
<feature type="chain" id="PRO_0000255988" description="ATP-dependent RNA helicase DBP1">
    <location>
        <begin position="1"/>
        <end position="604"/>
    </location>
</feature>
<feature type="domain" description="Helicase ATP-binding" evidence="2">
    <location>
        <begin position="169"/>
        <end position="358"/>
    </location>
</feature>
<feature type="domain" description="Helicase C-terminal" evidence="3">
    <location>
        <begin position="386"/>
        <end position="529"/>
    </location>
</feature>
<feature type="region of interest" description="Disordered" evidence="4">
    <location>
        <begin position="1"/>
        <end position="79"/>
    </location>
</feature>
<feature type="region of interest" description="Disordered" evidence="4">
    <location>
        <begin position="535"/>
        <end position="591"/>
    </location>
</feature>
<feature type="short sequence motif" description="Q motif">
    <location>
        <begin position="138"/>
        <end position="166"/>
    </location>
</feature>
<feature type="short sequence motif" description="DEAD box">
    <location>
        <begin position="302"/>
        <end position="305"/>
    </location>
</feature>
<feature type="compositionally biased region" description="Polar residues" evidence="4">
    <location>
        <begin position="32"/>
        <end position="45"/>
    </location>
</feature>
<feature type="compositionally biased region" description="Low complexity" evidence="4">
    <location>
        <begin position="541"/>
        <end position="552"/>
    </location>
</feature>
<feature type="compositionally biased region" description="Basic and acidic residues" evidence="4">
    <location>
        <begin position="553"/>
        <end position="565"/>
    </location>
</feature>
<feature type="binding site" evidence="2">
    <location>
        <begin position="182"/>
        <end position="189"/>
    </location>
    <ligand>
        <name>ATP</name>
        <dbReference type="ChEBI" id="CHEBI:30616"/>
    </ligand>
</feature>
<proteinExistence type="inferred from homology"/>